<accession>B6YR38</accession>
<reference key="1">
    <citation type="journal article" date="2008" name="Science">
        <title>Genome of an endosymbiont coupling N2 fixation to cellulolysis within RT protist cells in termite gut.</title>
        <authorList>
            <person name="Hongoh Y."/>
            <person name="Sharma V.K."/>
            <person name="Prakash T."/>
            <person name="Noda S."/>
            <person name="Toh H."/>
            <person name="Taylor T.D."/>
            <person name="Kudo T."/>
            <person name="Sakaki Y."/>
            <person name="Toyoda A."/>
            <person name="Hattori M."/>
            <person name="Ohkuma M."/>
        </authorList>
    </citation>
    <scope>NUCLEOTIDE SEQUENCE [LARGE SCALE GENOMIC DNA]</scope>
</reference>
<feature type="chain" id="PRO_1000090280" description="Holliday junction branch migration complex subunit RuvA">
    <location>
        <begin position="1"/>
        <end position="196"/>
    </location>
</feature>
<feature type="region of interest" description="Domain I" evidence="1">
    <location>
        <begin position="1"/>
        <end position="63"/>
    </location>
</feature>
<feature type="region of interest" description="Domain II" evidence="1">
    <location>
        <begin position="64"/>
        <end position="142"/>
    </location>
</feature>
<feature type="region of interest" description="Flexible linker" evidence="1">
    <location>
        <begin position="143"/>
        <end position="146"/>
    </location>
</feature>
<feature type="region of interest" description="Domain III" evidence="1">
    <location>
        <begin position="146"/>
        <end position="196"/>
    </location>
</feature>
<organism>
    <name type="scientific">Azobacteroides pseudotrichonymphae genomovar. CFP2</name>
    <dbReference type="NCBI Taxonomy" id="511995"/>
    <lineage>
        <taxon>Bacteria</taxon>
        <taxon>Pseudomonadati</taxon>
        <taxon>Bacteroidota</taxon>
        <taxon>Bacteroidia</taxon>
        <taxon>Bacteroidales</taxon>
        <taxon>Candidatus Azobacteroides</taxon>
    </lineage>
</organism>
<comment type="function">
    <text evidence="1">The RuvA-RuvB-RuvC complex processes Holliday junction (HJ) DNA during genetic recombination and DNA repair, while the RuvA-RuvB complex plays an important role in the rescue of blocked DNA replication forks via replication fork reversal (RFR). RuvA specifically binds to HJ cruciform DNA, conferring on it an open structure. The RuvB hexamer acts as an ATP-dependent pump, pulling dsDNA into and through the RuvAB complex. HJ branch migration allows RuvC to scan DNA until it finds its consensus sequence, where it cleaves and resolves the cruciform DNA.</text>
</comment>
<comment type="subunit">
    <text evidence="1">Homotetramer. Forms an RuvA(8)-RuvB(12)-Holliday junction (HJ) complex. HJ DNA is sandwiched between 2 RuvA tetramers; dsDNA enters through RuvA and exits via RuvB. An RuvB hexamer assembles on each DNA strand where it exits the tetramer. Each RuvB hexamer is contacted by two RuvA subunits (via domain III) on 2 adjacent RuvB subunits; this complex drives branch migration. In the full resolvosome a probable DNA-RuvA(4)-RuvB(12)-RuvC(2) complex forms which resolves the HJ.</text>
</comment>
<comment type="subcellular location">
    <subcellularLocation>
        <location evidence="1">Cytoplasm</location>
    </subcellularLocation>
</comment>
<comment type="domain">
    <text evidence="1">Has three domains with a flexible linker between the domains II and III and assumes an 'L' shape. Domain III is highly mobile and contacts RuvB.</text>
</comment>
<comment type="similarity">
    <text evidence="1">Belongs to the RuvA family.</text>
</comment>
<name>RUVA_AZOPC</name>
<dbReference type="EMBL" id="AP010656">
    <property type="protein sequence ID" value="BAG83660.1"/>
    <property type="molecule type" value="Genomic_DNA"/>
</dbReference>
<dbReference type="RefSeq" id="WP_012573421.1">
    <property type="nucleotide sequence ID" value="NC_011565.1"/>
</dbReference>
<dbReference type="SMR" id="B6YR38"/>
<dbReference type="STRING" id="511995.CFPG_397"/>
<dbReference type="KEGG" id="aps:CFPG_397"/>
<dbReference type="eggNOG" id="COG0632">
    <property type="taxonomic scope" value="Bacteria"/>
</dbReference>
<dbReference type="HOGENOM" id="CLU_087936_3_0_10"/>
<dbReference type="OrthoDB" id="5293449at2"/>
<dbReference type="Proteomes" id="UP000000723">
    <property type="component" value="Chromosome"/>
</dbReference>
<dbReference type="GO" id="GO:0005737">
    <property type="term" value="C:cytoplasm"/>
    <property type="evidence" value="ECO:0007669"/>
    <property type="project" value="UniProtKB-SubCell"/>
</dbReference>
<dbReference type="GO" id="GO:0009379">
    <property type="term" value="C:Holliday junction helicase complex"/>
    <property type="evidence" value="ECO:0007669"/>
    <property type="project" value="InterPro"/>
</dbReference>
<dbReference type="GO" id="GO:0048476">
    <property type="term" value="C:Holliday junction resolvase complex"/>
    <property type="evidence" value="ECO:0007669"/>
    <property type="project" value="UniProtKB-UniRule"/>
</dbReference>
<dbReference type="GO" id="GO:0005524">
    <property type="term" value="F:ATP binding"/>
    <property type="evidence" value="ECO:0007669"/>
    <property type="project" value="InterPro"/>
</dbReference>
<dbReference type="GO" id="GO:0000400">
    <property type="term" value="F:four-way junction DNA binding"/>
    <property type="evidence" value="ECO:0007669"/>
    <property type="project" value="UniProtKB-UniRule"/>
</dbReference>
<dbReference type="GO" id="GO:0009378">
    <property type="term" value="F:four-way junction helicase activity"/>
    <property type="evidence" value="ECO:0007669"/>
    <property type="project" value="InterPro"/>
</dbReference>
<dbReference type="GO" id="GO:0006310">
    <property type="term" value="P:DNA recombination"/>
    <property type="evidence" value="ECO:0007669"/>
    <property type="project" value="UniProtKB-UniRule"/>
</dbReference>
<dbReference type="GO" id="GO:0006281">
    <property type="term" value="P:DNA repair"/>
    <property type="evidence" value="ECO:0007669"/>
    <property type="project" value="UniProtKB-UniRule"/>
</dbReference>
<dbReference type="CDD" id="cd14332">
    <property type="entry name" value="UBA_RuvA_C"/>
    <property type="match status" value="1"/>
</dbReference>
<dbReference type="Gene3D" id="1.10.150.20">
    <property type="entry name" value="5' to 3' exonuclease, C-terminal subdomain"/>
    <property type="match status" value="1"/>
</dbReference>
<dbReference type="Gene3D" id="1.10.8.10">
    <property type="entry name" value="DNA helicase RuvA subunit, C-terminal domain"/>
    <property type="match status" value="1"/>
</dbReference>
<dbReference type="Gene3D" id="2.40.50.140">
    <property type="entry name" value="Nucleic acid-binding proteins"/>
    <property type="match status" value="1"/>
</dbReference>
<dbReference type="HAMAP" id="MF_00031">
    <property type="entry name" value="DNA_HJ_migration_RuvA"/>
    <property type="match status" value="1"/>
</dbReference>
<dbReference type="InterPro" id="IPR013849">
    <property type="entry name" value="DNA_helicase_Holl-junc_RuvA_I"/>
</dbReference>
<dbReference type="InterPro" id="IPR003583">
    <property type="entry name" value="Hlx-hairpin-Hlx_DNA-bd_motif"/>
</dbReference>
<dbReference type="InterPro" id="IPR012340">
    <property type="entry name" value="NA-bd_OB-fold"/>
</dbReference>
<dbReference type="InterPro" id="IPR000085">
    <property type="entry name" value="RuvA"/>
</dbReference>
<dbReference type="InterPro" id="IPR010994">
    <property type="entry name" value="RuvA_2-like"/>
</dbReference>
<dbReference type="InterPro" id="IPR011114">
    <property type="entry name" value="RuvA_C"/>
</dbReference>
<dbReference type="InterPro" id="IPR036267">
    <property type="entry name" value="RuvA_C_sf"/>
</dbReference>
<dbReference type="NCBIfam" id="TIGR00084">
    <property type="entry name" value="ruvA"/>
    <property type="match status" value="1"/>
</dbReference>
<dbReference type="Pfam" id="PF14520">
    <property type="entry name" value="HHH_5"/>
    <property type="match status" value="1"/>
</dbReference>
<dbReference type="Pfam" id="PF07499">
    <property type="entry name" value="RuvA_C"/>
    <property type="match status" value="1"/>
</dbReference>
<dbReference type="Pfam" id="PF01330">
    <property type="entry name" value="RuvA_N"/>
    <property type="match status" value="1"/>
</dbReference>
<dbReference type="SMART" id="SM00278">
    <property type="entry name" value="HhH1"/>
    <property type="match status" value="2"/>
</dbReference>
<dbReference type="SUPFAM" id="SSF46929">
    <property type="entry name" value="DNA helicase RuvA subunit, C-terminal domain"/>
    <property type="match status" value="1"/>
</dbReference>
<dbReference type="SUPFAM" id="SSF50249">
    <property type="entry name" value="Nucleic acid-binding proteins"/>
    <property type="match status" value="1"/>
</dbReference>
<dbReference type="SUPFAM" id="SSF47781">
    <property type="entry name" value="RuvA domain 2-like"/>
    <property type="match status" value="1"/>
</dbReference>
<keyword id="KW-0963">Cytoplasm</keyword>
<keyword id="KW-0227">DNA damage</keyword>
<keyword id="KW-0233">DNA recombination</keyword>
<keyword id="KW-0234">DNA repair</keyword>
<keyword id="KW-0238">DNA-binding</keyword>
<keyword id="KW-1185">Reference proteome</keyword>
<gene>
    <name evidence="1" type="primary">ruvA</name>
    <name type="ordered locus">CFPG_397</name>
</gene>
<proteinExistence type="inferred from homology"/>
<sequence length="196" mass="21623">MLDFIKGEIVELIPDSVIIETGNIGYMLFISLNTYFSLTKIKSCKLYIYEVIREETHQLFGFIDKKERQLFTHLISVPGVGANIARMVLSSLSVCELEEIIFSGNVSALQALKGIGNKTAERIIIDLKDKVKPDNIPSSDTIITNISSNITKEAITALITLGFSQSASQKVVNKIVSNNSSSTTIEQIIKKALKLL</sequence>
<evidence type="ECO:0000255" key="1">
    <source>
        <dbReference type="HAMAP-Rule" id="MF_00031"/>
    </source>
</evidence>
<protein>
    <recommendedName>
        <fullName evidence="1">Holliday junction branch migration complex subunit RuvA</fullName>
    </recommendedName>
</protein>